<comment type="function">
    <text evidence="1">Catalyzes the NAD(+)-dependent oxidation of L-threonine to 2-amino-3-ketobutyrate.</text>
</comment>
<comment type="catalytic activity">
    <reaction evidence="1">
        <text>L-threonine + NAD(+) = (2S)-2-amino-3-oxobutanoate + NADH + H(+)</text>
        <dbReference type="Rhea" id="RHEA:13161"/>
        <dbReference type="ChEBI" id="CHEBI:15378"/>
        <dbReference type="ChEBI" id="CHEBI:57540"/>
        <dbReference type="ChEBI" id="CHEBI:57926"/>
        <dbReference type="ChEBI" id="CHEBI:57945"/>
        <dbReference type="ChEBI" id="CHEBI:78948"/>
        <dbReference type="EC" id="1.1.1.103"/>
    </reaction>
</comment>
<comment type="cofactor">
    <cofactor evidence="1">
        <name>Zn(2+)</name>
        <dbReference type="ChEBI" id="CHEBI:29105"/>
    </cofactor>
    <text evidence="1">Binds 2 Zn(2+) ions per subunit.</text>
</comment>
<comment type="pathway">
    <text evidence="1">Amino-acid degradation; L-threonine degradation via oxydo-reductase pathway; glycine from L-threonine: step 1/2.</text>
</comment>
<comment type="subunit">
    <text evidence="1">Homotetramer.</text>
</comment>
<comment type="subcellular location">
    <subcellularLocation>
        <location evidence="1">Cytoplasm</location>
    </subcellularLocation>
</comment>
<comment type="similarity">
    <text evidence="1">Belongs to the zinc-containing alcohol dehydrogenase family.</text>
</comment>
<sequence>MKALSKLKAEEGIWMTDVPEPEVGHNDLLIKIRKTAICGTDVHIYNWDDWSQKTIPVPMVVGHEYVGEVVGIGQEVKGFKIGDRVSGEGHITCGHCRNCRGGRTHLCRNTTGVGVNRPGCFAEYLVIPAFNAFKIPDNISDDLASIFDPFGNAVHTALSFDLVGEDVLVSGAGPIGVMAAAVAKHVGARHVVITDVNEYRLELARKMGVTRAVNVAKESLNDVMAELGMTEGFDVGLEMSGAPPAFRTMLDTMNHGGRIAMLGIPPSDMSIDWTKVIFKGLFIKGIYGREMFETWYKMAALIQSGLDLSPIITHRFSIDDFQKGFDAMRSGQSGKVILSWD</sequence>
<dbReference type="EC" id="1.1.1.103" evidence="1"/>
<dbReference type="EMBL" id="CP000886">
    <property type="protein sequence ID" value="ABX69918.1"/>
    <property type="molecule type" value="Genomic_DNA"/>
</dbReference>
<dbReference type="RefSeq" id="WP_000645990.1">
    <property type="nucleotide sequence ID" value="NC_010102.1"/>
</dbReference>
<dbReference type="SMR" id="A9MVL0"/>
<dbReference type="KEGG" id="spq:SPAB_04605"/>
<dbReference type="PATRIC" id="fig|1016998.12.peg.4331"/>
<dbReference type="HOGENOM" id="CLU_026673_11_0_6"/>
<dbReference type="BioCyc" id="SENT1016998:SPAB_RS18735-MONOMER"/>
<dbReference type="UniPathway" id="UPA00046">
    <property type="reaction ID" value="UER00505"/>
</dbReference>
<dbReference type="Proteomes" id="UP000008556">
    <property type="component" value="Chromosome"/>
</dbReference>
<dbReference type="GO" id="GO:0005737">
    <property type="term" value="C:cytoplasm"/>
    <property type="evidence" value="ECO:0007669"/>
    <property type="project" value="UniProtKB-SubCell"/>
</dbReference>
<dbReference type="GO" id="GO:0008743">
    <property type="term" value="F:L-threonine 3-dehydrogenase activity"/>
    <property type="evidence" value="ECO:0007669"/>
    <property type="project" value="UniProtKB-UniRule"/>
</dbReference>
<dbReference type="GO" id="GO:0008270">
    <property type="term" value="F:zinc ion binding"/>
    <property type="evidence" value="ECO:0007669"/>
    <property type="project" value="UniProtKB-UniRule"/>
</dbReference>
<dbReference type="GO" id="GO:0019518">
    <property type="term" value="P:L-threonine catabolic process to glycine"/>
    <property type="evidence" value="ECO:0007669"/>
    <property type="project" value="UniProtKB-UniPathway"/>
</dbReference>
<dbReference type="FunFam" id="3.40.50.720:FF:000059">
    <property type="entry name" value="L-threonine 3-dehydrogenase"/>
    <property type="match status" value="1"/>
</dbReference>
<dbReference type="Gene3D" id="3.90.180.10">
    <property type="entry name" value="Medium-chain alcohol dehydrogenases, catalytic domain"/>
    <property type="match status" value="1"/>
</dbReference>
<dbReference type="Gene3D" id="3.40.50.720">
    <property type="entry name" value="NAD(P)-binding Rossmann-like Domain"/>
    <property type="match status" value="1"/>
</dbReference>
<dbReference type="HAMAP" id="MF_00627">
    <property type="entry name" value="Thr_dehydrog"/>
    <property type="match status" value="1"/>
</dbReference>
<dbReference type="InterPro" id="IPR013149">
    <property type="entry name" value="ADH-like_C"/>
</dbReference>
<dbReference type="InterPro" id="IPR013154">
    <property type="entry name" value="ADH-like_N"/>
</dbReference>
<dbReference type="InterPro" id="IPR002328">
    <property type="entry name" value="ADH_Zn_CS"/>
</dbReference>
<dbReference type="InterPro" id="IPR011032">
    <property type="entry name" value="GroES-like_sf"/>
</dbReference>
<dbReference type="InterPro" id="IPR004627">
    <property type="entry name" value="L-Threonine_3-DHase"/>
</dbReference>
<dbReference type="InterPro" id="IPR036291">
    <property type="entry name" value="NAD(P)-bd_dom_sf"/>
</dbReference>
<dbReference type="InterPro" id="IPR020843">
    <property type="entry name" value="PKS_ER"/>
</dbReference>
<dbReference type="InterPro" id="IPR050129">
    <property type="entry name" value="Zn_alcohol_dh"/>
</dbReference>
<dbReference type="NCBIfam" id="NF003808">
    <property type="entry name" value="PRK05396.1"/>
    <property type="match status" value="1"/>
</dbReference>
<dbReference type="NCBIfam" id="TIGR00692">
    <property type="entry name" value="tdh"/>
    <property type="match status" value="1"/>
</dbReference>
<dbReference type="PANTHER" id="PTHR43401">
    <property type="entry name" value="L-THREONINE 3-DEHYDROGENASE"/>
    <property type="match status" value="1"/>
</dbReference>
<dbReference type="PANTHER" id="PTHR43401:SF2">
    <property type="entry name" value="L-THREONINE 3-DEHYDROGENASE"/>
    <property type="match status" value="1"/>
</dbReference>
<dbReference type="Pfam" id="PF08240">
    <property type="entry name" value="ADH_N"/>
    <property type="match status" value="1"/>
</dbReference>
<dbReference type="Pfam" id="PF00107">
    <property type="entry name" value="ADH_zinc_N"/>
    <property type="match status" value="1"/>
</dbReference>
<dbReference type="SMART" id="SM00829">
    <property type="entry name" value="PKS_ER"/>
    <property type="match status" value="1"/>
</dbReference>
<dbReference type="SUPFAM" id="SSF50129">
    <property type="entry name" value="GroES-like"/>
    <property type="match status" value="1"/>
</dbReference>
<dbReference type="SUPFAM" id="SSF51735">
    <property type="entry name" value="NAD(P)-binding Rossmann-fold domains"/>
    <property type="match status" value="1"/>
</dbReference>
<dbReference type="PROSITE" id="PS00059">
    <property type="entry name" value="ADH_ZINC"/>
    <property type="match status" value="1"/>
</dbReference>
<name>TDH_SALPB</name>
<reference key="1">
    <citation type="submission" date="2007-11" db="EMBL/GenBank/DDBJ databases">
        <authorList>
            <consortium name="The Salmonella enterica serovar Paratyphi B Genome Sequencing Project"/>
            <person name="McClelland M."/>
            <person name="Sanderson E.K."/>
            <person name="Porwollik S."/>
            <person name="Spieth J."/>
            <person name="Clifton W.S."/>
            <person name="Fulton R."/>
            <person name="Cordes M."/>
            <person name="Wollam A."/>
            <person name="Shah N."/>
            <person name="Pepin K."/>
            <person name="Bhonagiri V."/>
            <person name="Nash W."/>
            <person name="Johnson M."/>
            <person name="Thiruvilangam P."/>
            <person name="Wilson R."/>
        </authorList>
    </citation>
    <scope>NUCLEOTIDE SEQUENCE [LARGE SCALE GENOMIC DNA]</scope>
    <source>
        <strain>ATCC BAA-1250 / SPB7</strain>
    </source>
</reference>
<protein>
    <recommendedName>
        <fullName evidence="1">L-threonine 3-dehydrogenase</fullName>
        <shortName evidence="1">TDH</shortName>
        <ecNumber evidence="1">1.1.1.103</ecNumber>
    </recommendedName>
</protein>
<keyword id="KW-0963">Cytoplasm</keyword>
<keyword id="KW-0479">Metal-binding</keyword>
<keyword id="KW-0520">NAD</keyword>
<keyword id="KW-0560">Oxidoreductase</keyword>
<keyword id="KW-0862">Zinc</keyword>
<evidence type="ECO:0000255" key="1">
    <source>
        <dbReference type="HAMAP-Rule" id="MF_00627"/>
    </source>
</evidence>
<proteinExistence type="inferred from homology"/>
<gene>
    <name evidence="1" type="primary">tdh</name>
    <name type="ordered locus">SPAB_04605</name>
</gene>
<feature type="chain" id="PRO_1000082614" description="L-threonine 3-dehydrogenase">
    <location>
        <begin position="1"/>
        <end position="341"/>
    </location>
</feature>
<feature type="active site" description="Charge relay system" evidence="1">
    <location>
        <position position="40"/>
    </location>
</feature>
<feature type="active site" description="Charge relay system" evidence="1">
    <location>
        <position position="43"/>
    </location>
</feature>
<feature type="binding site" evidence="1">
    <location>
        <position position="38"/>
    </location>
    <ligand>
        <name>Zn(2+)</name>
        <dbReference type="ChEBI" id="CHEBI:29105"/>
        <label>1</label>
        <note>catalytic</note>
    </ligand>
</feature>
<feature type="binding site" evidence="1">
    <location>
        <position position="63"/>
    </location>
    <ligand>
        <name>Zn(2+)</name>
        <dbReference type="ChEBI" id="CHEBI:29105"/>
        <label>1</label>
        <note>catalytic</note>
    </ligand>
</feature>
<feature type="binding site" evidence="1">
    <location>
        <position position="64"/>
    </location>
    <ligand>
        <name>Zn(2+)</name>
        <dbReference type="ChEBI" id="CHEBI:29105"/>
        <label>1</label>
        <note>catalytic</note>
    </ligand>
</feature>
<feature type="binding site" evidence="1">
    <location>
        <position position="93"/>
    </location>
    <ligand>
        <name>Zn(2+)</name>
        <dbReference type="ChEBI" id="CHEBI:29105"/>
        <label>2</label>
    </ligand>
</feature>
<feature type="binding site" evidence="1">
    <location>
        <position position="96"/>
    </location>
    <ligand>
        <name>Zn(2+)</name>
        <dbReference type="ChEBI" id="CHEBI:29105"/>
        <label>2</label>
    </ligand>
</feature>
<feature type="binding site" evidence="1">
    <location>
        <position position="99"/>
    </location>
    <ligand>
        <name>Zn(2+)</name>
        <dbReference type="ChEBI" id="CHEBI:29105"/>
        <label>2</label>
    </ligand>
</feature>
<feature type="binding site" evidence="1">
    <location>
        <position position="107"/>
    </location>
    <ligand>
        <name>Zn(2+)</name>
        <dbReference type="ChEBI" id="CHEBI:29105"/>
        <label>2</label>
    </ligand>
</feature>
<feature type="binding site" evidence="1">
    <location>
        <position position="175"/>
    </location>
    <ligand>
        <name>NAD(+)</name>
        <dbReference type="ChEBI" id="CHEBI:57540"/>
    </ligand>
</feature>
<feature type="binding site" evidence="1">
    <location>
        <position position="195"/>
    </location>
    <ligand>
        <name>NAD(+)</name>
        <dbReference type="ChEBI" id="CHEBI:57540"/>
    </ligand>
</feature>
<feature type="binding site" evidence="1">
    <location>
        <position position="200"/>
    </location>
    <ligand>
        <name>NAD(+)</name>
        <dbReference type="ChEBI" id="CHEBI:57540"/>
    </ligand>
</feature>
<feature type="binding site" evidence="1">
    <location>
        <begin position="262"/>
        <end position="264"/>
    </location>
    <ligand>
        <name>NAD(+)</name>
        <dbReference type="ChEBI" id="CHEBI:57540"/>
    </ligand>
</feature>
<feature type="binding site" evidence="1">
    <location>
        <begin position="286"/>
        <end position="287"/>
    </location>
    <ligand>
        <name>NAD(+)</name>
        <dbReference type="ChEBI" id="CHEBI:57540"/>
    </ligand>
</feature>
<feature type="site" description="Important for catalytic activity for the proton relay mechanism but does not participate directly in the coordination of zinc atom" evidence="1">
    <location>
        <position position="148"/>
    </location>
</feature>
<organism>
    <name type="scientific">Salmonella paratyphi B (strain ATCC BAA-1250 / SPB7)</name>
    <dbReference type="NCBI Taxonomy" id="1016998"/>
    <lineage>
        <taxon>Bacteria</taxon>
        <taxon>Pseudomonadati</taxon>
        <taxon>Pseudomonadota</taxon>
        <taxon>Gammaproteobacteria</taxon>
        <taxon>Enterobacterales</taxon>
        <taxon>Enterobacteriaceae</taxon>
        <taxon>Salmonella</taxon>
    </lineage>
</organism>
<accession>A9MVL0</accession>